<reference key="1">
    <citation type="journal article" date="2004" name="PLoS Biol.">
        <title>Phylogenomics of the reproductive parasite Wolbachia pipientis wMel: a streamlined genome overrun by mobile genetic elements.</title>
        <authorList>
            <person name="Wu M."/>
            <person name="Sun L.V."/>
            <person name="Vamathevan J.J."/>
            <person name="Riegler M."/>
            <person name="DeBoy R.T."/>
            <person name="Brownlie J.C."/>
            <person name="McGraw E.A."/>
            <person name="Martin W."/>
            <person name="Esser C."/>
            <person name="Ahmadinejad N."/>
            <person name="Wiegand C."/>
            <person name="Madupu R."/>
            <person name="Beanan M.J."/>
            <person name="Brinkac L.M."/>
            <person name="Daugherty S.C."/>
            <person name="Durkin A.S."/>
            <person name="Kolonay J.F."/>
            <person name="Nelson W.C."/>
            <person name="Mohamoud Y."/>
            <person name="Lee P."/>
            <person name="Berry K.J."/>
            <person name="Young M.B."/>
            <person name="Utterback T.R."/>
            <person name="Weidman J.F."/>
            <person name="Nierman W.C."/>
            <person name="Paulsen I.T."/>
            <person name="Nelson K.E."/>
            <person name="Tettelin H."/>
            <person name="O'Neill S.L."/>
            <person name="Eisen J.A."/>
        </authorList>
    </citation>
    <scope>NUCLEOTIDE SEQUENCE [LARGE SCALE GENOMIC DNA]</scope>
</reference>
<name>ISPH_WOLPM</name>
<sequence length="309" mass="34444">MEIILAEPRGFCAGVKRAVDILAITLEKYKNERQVYVLHEIVHNKYIVEDFKKQGVVFVSSIEEIEDNEGILIFSAHGVSKNIEDEAKRKGIQVIDATCPLVNKVHKEAKRYENSGKELILIGHENHPEVKGIRGRVNNPITLVQTLQDVYDLKVKDPDNLSYVTQTTLSIDDTRDIIAALKLRFPGITGPDLKDICYATQNRQNAVKKLAEIVDMVLVVGSKNSSNSNRLLDLCTARGKRAYLIDNYSCVNKSWFQGVEKIGITAGASAPDILVDELIDYLKVNLSVKISVMPGGITENVQFKIPNLV</sequence>
<comment type="function">
    <text evidence="1">Catalyzes the conversion of 1-hydroxy-2-methyl-2-(E)-butenyl 4-diphosphate (HMBPP) into a mixture of isopentenyl diphosphate (IPP) and dimethylallyl diphosphate (DMAPP). Acts in the terminal step of the DOXP/MEP pathway for isoprenoid precursor biosynthesis.</text>
</comment>
<comment type="catalytic activity">
    <reaction evidence="1">
        <text>isopentenyl diphosphate + 2 oxidized [2Fe-2S]-[ferredoxin] + H2O = (2E)-4-hydroxy-3-methylbut-2-enyl diphosphate + 2 reduced [2Fe-2S]-[ferredoxin] + 2 H(+)</text>
        <dbReference type="Rhea" id="RHEA:24488"/>
        <dbReference type="Rhea" id="RHEA-COMP:10000"/>
        <dbReference type="Rhea" id="RHEA-COMP:10001"/>
        <dbReference type="ChEBI" id="CHEBI:15377"/>
        <dbReference type="ChEBI" id="CHEBI:15378"/>
        <dbReference type="ChEBI" id="CHEBI:33737"/>
        <dbReference type="ChEBI" id="CHEBI:33738"/>
        <dbReference type="ChEBI" id="CHEBI:128753"/>
        <dbReference type="ChEBI" id="CHEBI:128769"/>
        <dbReference type="EC" id="1.17.7.4"/>
    </reaction>
</comment>
<comment type="catalytic activity">
    <reaction evidence="1">
        <text>dimethylallyl diphosphate + 2 oxidized [2Fe-2S]-[ferredoxin] + H2O = (2E)-4-hydroxy-3-methylbut-2-enyl diphosphate + 2 reduced [2Fe-2S]-[ferredoxin] + 2 H(+)</text>
        <dbReference type="Rhea" id="RHEA:24825"/>
        <dbReference type="Rhea" id="RHEA-COMP:10000"/>
        <dbReference type="Rhea" id="RHEA-COMP:10001"/>
        <dbReference type="ChEBI" id="CHEBI:15377"/>
        <dbReference type="ChEBI" id="CHEBI:15378"/>
        <dbReference type="ChEBI" id="CHEBI:33737"/>
        <dbReference type="ChEBI" id="CHEBI:33738"/>
        <dbReference type="ChEBI" id="CHEBI:57623"/>
        <dbReference type="ChEBI" id="CHEBI:128753"/>
        <dbReference type="EC" id="1.17.7.4"/>
    </reaction>
</comment>
<comment type="cofactor">
    <cofactor evidence="1">
        <name>[4Fe-4S] cluster</name>
        <dbReference type="ChEBI" id="CHEBI:49883"/>
    </cofactor>
    <text evidence="1">Binds 1 [4Fe-4S] cluster per subunit.</text>
</comment>
<comment type="pathway">
    <text evidence="1">Isoprenoid biosynthesis; dimethylallyl diphosphate biosynthesis; dimethylallyl diphosphate from (2E)-4-hydroxy-3-methylbutenyl diphosphate: step 1/1.</text>
</comment>
<comment type="pathway">
    <text evidence="1">Isoprenoid biosynthesis; isopentenyl diphosphate biosynthesis via DXP pathway; isopentenyl diphosphate from 1-deoxy-D-xylulose 5-phosphate: step 6/6.</text>
</comment>
<comment type="similarity">
    <text evidence="1">Belongs to the IspH family.</text>
</comment>
<feature type="chain" id="PRO_0000128895" description="4-hydroxy-3-methylbut-2-enyl diphosphate reductase">
    <location>
        <begin position="1"/>
        <end position="309"/>
    </location>
</feature>
<feature type="active site" description="Proton donor" evidence="1">
    <location>
        <position position="129"/>
    </location>
</feature>
<feature type="binding site" evidence="1">
    <location>
        <position position="12"/>
    </location>
    <ligand>
        <name>[4Fe-4S] cluster</name>
        <dbReference type="ChEBI" id="CHEBI:49883"/>
    </ligand>
</feature>
<feature type="binding site" evidence="1">
    <location>
        <position position="43"/>
    </location>
    <ligand>
        <name>(2E)-4-hydroxy-3-methylbut-2-enyl diphosphate</name>
        <dbReference type="ChEBI" id="CHEBI:128753"/>
    </ligand>
</feature>
<feature type="binding site" evidence="1">
    <location>
        <position position="43"/>
    </location>
    <ligand>
        <name>dimethylallyl diphosphate</name>
        <dbReference type="ChEBI" id="CHEBI:57623"/>
    </ligand>
</feature>
<feature type="binding site" evidence="1">
    <location>
        <position position="43"/>
    </location>
    <ligand>
        <name>isopentenyl diphosphate</name>
        <dbReference type="ChEBI" id="CHEBI:128769"/>
    </ligand>
</feature>
<feature type="binding site" evidence="1">
    <location>
        <position position="77"/>
    </location>
    <ligand>
        <name>(2E)-4-hydroxy-3-methylbut-2-enyl diphosphate</name>
        <dbReference type="ChEBI" id="CHEBI:128753"/>
    </ligand>
</feature>
<feature type="binding site" evidence="1">
    <location>
        <position position="77"/>
    </location>
    <ligand>
        <name>dimethylallyl diphosphate</name>
        <dbReference type="ChEBI" id="CHEBI:57623"/>
    </ligand>
</feature>
<feature type="binding site" evidence="1">
    <location>
        <position position="77"/>
    </location>
    <ligand>
        <name>isopentenyl diphosphate</name>
        <dbReference type="ChEBI" id="CHEBI:128769"/>
    </ligand>
</feature>
<feature type="binding site" evidence="1">
    <location>
        <position position="99"/>
    </location>
    <ligand>
        <name>[4Fe-4S] cluster</name>
        <dbReference type="ChEBI" id="CHEBI:49883"/>
    </ligand>
</feature>
<feature type="binding site" evidence="1">
    <location>
        <position position="127"/>
    </location>
    <ligand>
        <name>(2E)-4-hydroxy-3-methylbut-2-enyl diphosphate</name>
        <dbReference type="ChEBI" id="CHEBI:128753"/>
    </ligand>
</feature>
<feature type="binding site" evidence="1">
    <location>
        <position position="127"/>
    </location>
    <ligand>
        <name>dimethylallyl diphosphate</name>
        <dbReference type="ChEBI" id="CHEBI:57623"/>
    </ligand>
</feature>
<feature type="binding site" evidence="1">
    <location>
        <position position="127"/>
    </location>
    <ligand>
        <name>isopentenyl diphosphate</name>
        <dbReference type="ChEBI" id="CHEBI:128769"/>
    </ligand>
</feature>
<feature type="binding site" evidence="1">
    <location>
        <position position="167"/>
    </location>
    <ligand>
        <name>(2E)-4-hydroxy-3-methylbut-2-enyl diphosphate</name>
        <dbReference type="ChEBI" id="CHEBI:128753"/>
    </ligand>
</feature>
<feature type="binding site" evidence="1">
    <location>
        <position position="197"/>
    </location>
    <ligand>
        <name>[4Fe-4S] cluster</name>
        <dbReference type="ChEBI" id="CHEBI:49883"/>
    </ligand>
</feature>
<feature type="binding site" evidence="1">
    <location>
        <position position="225"/>
    </location>
    <ligand>
        <name>(2E)-4-hydroxy-3-methylbut-2-enyl diphosphate</name>
        <dbReference type="ChEBI" id="CHEBI:128753"/>
    </ligand>
</feature>
<feature type="binding site" evidence="1">
    <location>
        <position position="225"/>
    </location>
    <ligand>
        <name>dimethylallyl diphosphate</name>
        <dbReference type="ChEBI" id="CHEBI:57623"/>
    </ligand>
</feature>
<feature type="binding site" evidence="1">
    <location>
        <position position="225"/>
    </location>
    <ligand>
        <name>isopentenyl diphosphate</name>
        <dbReference type="ChEBI" id="CHEBI:128769"/>
    </ligand>
</feature>
<feature type="binding site" evidence="1">
    <location>
        <position position="226"/>
    </location>
    <ligand>
        <name>(2E)-4-hydroxy-3-methylbut-2-enyl diphosphate</name>
        <dbReference type="ChEBI" id="CHEBI:128753"/>
    </ligand>
</feature>
<feature type="binding site" evidence="1">
    <location>
        <position position="226"/>
    </location>
    <ligand>
        <name>dimethylallyl diphosphate</name>
        <dbReference type="ChEBI" id="CHEBI:57623"/>
    </ligand>
</feature>
<feature type="binding site" evidence="1">
    <location>
        <position position="226"/>
    </location>
    <ligand>
        <name>isopentenyl diphosphate</name>
        <dbReference type="ChEBI" id="CHEBI:128769"/>
    </ligand>
</feature>
<feature type="binding site" evidence="1">
    <location>
        <position position="227"/>
    </location>
    <ligand>
        <name>(2E)-4-hydroxy-3-methylbut-2-enyl diphosphate</name>
        <dbReference type="ChEBI" id="CHEBI:128753"/>
    </ligand>
</feature>
<feature type="binding site" evidence="1">
    <location>
        <position position="227"/>
    </location>
    <ligand>
        <name>dimethylallyl diphosphate</name>
        <dbReference type="ChEBI" id="CHEBI:57623"/>
    </ligand>
</feature>
<feature type="binding site" evidence="1">
    <location>
        <position position="227"/>
    </location>
    <ligand>
        <name>isopentenyl diphosphate</name>
        <dbReference type="ChEBI" id="CHEBI:128769"/>
    </ligand>
</feature>
<feature type="binding site" evidence="1">
    <location>
        <position position="269"/>
    </location>
    <ligand>
        <name>(2E)-4-hydroxy-3-methylbut-2-enyl diphosphate</name>
        <dbReference type="ChEBI" id="CHEBI:128753"/>
    </ligand>
</feature>
<feature type="binding site" evidence="1">
    <location>
        <position position="269"/>
    </location>
    <ligand>
        <name>dimethylallyl diphosphate</name>
        <dbReference type="ChEBI" id="CHEBI:57623"/>
    </ligand>
</feature>
<feature type="binding site" evidence="1">
    <location>
        <position position="269"/>
    </location>
    <ligand>
        <name>isopentenyl diphosphate</name>
        <dbReference type="ChEBI" id="CHEBI:128769"/>
    </ligand>
</feature>
<organism>
    <name type="scientific">Wolbachia pipientis wMel</name>
    <dbReference type="NCBI Taxonomy" id="163164"/>
    <lineage>
        <taxon>Bacteria</taxon>
        <taxon>Pseudomonadati</taxon>
        <taxon>Pseudomonadota</taxon>
        <taxon>Alphaproteobacteria</taxon>
        <taxon>Rickettsiales</taxon>
        <taxon>Anaplasmataceae</taxon>
        <taxon>Wolbachieae</taxon>
        <taxon>Wolbachia</taxon>
    </lineage>
</organism>
<proteinExistence type="inferred from homology"/>
<accession>Q73FQ1</accession>
<protein>
    <recommendedName>
        <fullName evidence="1">4-hydroxy-3-methylbut-2-enyl diphosphate reductase</fullName>
        <shortName evidence="1">HMBPP reductase</shortName>
        <ecNumber evidence="1">1.17.7.4</ecNumber>
    </recommendedName>
</protein>
<keyword id="KW-0004">4Fe-4S</keyword>
<keyword id="KW-0408">Iron</keyword>
<keyword id="KW-0411">Iron-sulfur</keyword>
<keyword id="KW-0414">Isoprene biosynthesis</keyword>
<keyword id="KW-0479">Metal-binding</keyword>
<keyword id="KW-0560">Oxidoreductase</keyword>
<evidence type="ECO:0000255" key="1">
    <source>
        <dbReference type="HAMAP-Rule" id="MF_00191"/>
    </source>
</evidence>
<dbReference type="EC" id="1.17.7.4" evidence="1"/>
<dbReference type="EMBL" id="AE017196">
    <property type="protein sequence ID" value="AAS14918.1"/>
    <property type="molecule type" value="Genomic_DNA"/>
</dbReference>
<dbReference type="RefSeq" id="WP_010963148.1">
    <property type="nucleotide sequence ID" value="NZ_OX384529.1"/>
</dbReference>
<dbReference type="SMR" id="Q73FQ1"/>
<dbReference type="EnsemblBacteria" id="AAS14918">
    <property type="protein sequence ID" value="AAS14918"/>
    <property type="gene ID" value="WD_1274"/>
</dbReference>
<dbReference type="GeneID" id="70036740"/>
<dbReference type="KEGG" id="wol:WD_1274"/>
<dbReference type="eggNOG" id="COG0761">
    <property type="taxonomic scope" value="Bacteria"/>
</dbReference>
<dbReference type="UniPathway" id="UPA00056">
    <property type="reaction ID" value="UER00097"/>
</dbReference>
<dbReference type="UniPathway" id="UPA00059">
    <property type="reaction ID" value="UER00105"/>
</dbReference>
<dbReference type="Proteomes" id="UP000008215">
    <property type="component" value="Chromosome"/>
</dbReference>
<dbReference type="GO" id="GO:0051539">
    <property type="term" value="F:4 iron, 4 sulfur cluster binding"/>
    <property type="evidence" value="ECO:0007669"/>
    <property type="project" value="UniProtKB-UniRule"/>
</dbReference>
<dbReference type="GO" id="GO:0051745">
    <property type="term" value="F:4-hydroxy-3-methylbut-2-enyl diphosphate reductase activity"/>
    <property type="evidence" value="ECO:0007669"/>
    <property type="project" value="UniProtKB-UniRule"/>
</dbReference>
<dbReference type="GO" id="GO:0046872">
    <property type="term" value="F:metal ion binding"/>
    <property type="evidence" value="ECO:0007669"/>
    <property type="project" value="UniProtKB-KW"/>
</dbReference>
<dbReference type="GO" id="GO:0050992">
    <property type="term" value="P:dimethylallyl diphosphate biosynthetic process"/>
    <property type="evidence" value="ECO:0007669"/>
    <property type="project" value="UniProtKB-UniRule"/>
</dbReference>
<dbReference type="GO" id="GO:0019288">
    <property type="term" value="P:isopentenyl diphosphate biosynthetic process, methylerythritol 4-phosphate pathway"/>
    <property type="evidence" value="ECO:0007669"/>
    <property type="project" value="UniProtKB-UniRule"/>
</dbReference>
<dbReference type="GO" id="GO:0016114">
    <property type="term" value="P:terpenoid biosynthetic process"/>
    <property type="evidence" value="ECO:0007669"/>
    <property type="project" value="UniProtKB-UniRule"/>
</dbReference>
<dbReference type="CDD" id="cd13944">
    <property type="entry name" value="lytB_ispH"/>
    <property type="match status" value="1"/>
</dbReference>
<dbReference type="Gene3D" id="3.40.50.11270">
    <property type="match status" value="1"/>
</dbReference>
<dbReference type="Gene3D" id="3.40.1010.20">
    <property type="entry name" value="4-hydroxy-3-methylbut-2-enyl diphosphate reductase, catalytic domain"/>
    <property type="match status" value="2"/>
</dbReference>
<dbReference type="HAMAP" id="MF_00191">
    <property type="entry name" value="IspH"/>
    <property type="match status" value="1"/>
</dbReference>
<dbReference type="InterPro" id="IPR003451">
    <property type="entry name" value="LytB/IspH"/>
</dbReference>
<dbReference type="NCBIfam" id="TIGR00216">
    <property type="entry name" value="ispH_lytB"/>
    <property type="match status" value="1"/>
</dbReference>
<dbReference type="NCBIfam" id="NF002188">
    <property type="entry name" value="PRK01045.1-2"/>
    <property type="match status" value="1"/>
</dbReference>
<dbReference type="NCBIfam" id="NF002190">
    <property type="entry name" value="PRK01045.1-4"/>
    <property type="match status" value="1"/>
</dbReference>
<dbReference type="PANTHER" id="PTHR30426">
    <property type="entry name" value="4-HYDROXY-3-METHYLBUT-2-ENYL DIPHOSPHATE REDUCTASE"/>
    <property type="match status" value="1"/>
</dbReference>
<dbReference type="PANTHER" id="PTHR30426:SF0">
    <property type="entry name" value="4-HYDROXY-3-METHYLBUT-2-ENYL DIPHOSPHATE REDUCTASE"/>
    <property type="match status" value="1"/>
</dbReference>
<dbReference type="Pfam" id="PF02401">
    <property type="entry name" value="LYTB"/>
    <property type="match status" value="1"/>
</dbReference>
<gene>
    <name evidence="1" type="primary">ispH</name>
    <name type="synonym">lytB</name>
    <name type="ordered locus">WD_1274</name>
</gene>